<protein>
    <recommendedName>
        <fullName evidence="1">UPF0257 lipoprotein YnfC</fullName>
    </recommendedName>
</protein>
<comment type="subcellular location">
    <subcellularLocation>
        <location evidence="1">Cell membrane</location>
        <topology evidence="1">Lipid-anchor</topology>
    </subcellularLocation>
</comment>
<comment type="similarity">
    <text evidence="1">Belongs to the UPF0257 family.</text>
</comment>
<comment type="sequence caution" evidence="2">
    <conflict type="erroneous initiation">
        <sequence resource="EMBL-CDS" id="AAL20420"/>
    </conflict>
</comment>
<sequence length="236" mass="26202">MKKPLLLTLLCMILAGCDNPKSLESFTPEMASFSNEFDFDPLRGPVKDFSQTLMSENGEVAKQVTGTLSQEGCFDTLELHDLENNTGLALVLDANYYRDAQTLEKKVQLQGKCQLAALPSAGVTWETDDNGFVVSATGKEMKVEYRYDSEGYPLGKTTINSQNTLSVTAKPSADPRKKLDYTAVSRVDDRQVGNVTQSCEYDAYANPVDCRLVIVDESVKPAVSHHYTIKNRIDYY</sequence>
<accession>Q8ZPJ4</accession>
<feature type="signal peptide" evidence="1">
    <location>
        <begin position="1"/>
        <end position="16"/>
    </location>
</feature>
<feature type="chain" id="PRO_0000036265" description="UPF0257 lipoprotein YnfC">
    <location>
        <begin position="17"/>
        <end position="236"/>
    </location>
</feature>
<feature type="lipid moiety-binding region" description="N-palmitoyl cysteine" evidence="1">
    <location>
        <position position="17"/>
    </location>
</feature>
<feature type="lipid moiety-binding region" description="S-diacylglycerol cysteine" evidence="1">
    <location>
        <position position="17"/>
    </location>
</feature>
<evidence type="ECO:0000255" key="1">
    <source>
        <dbReference type="HAMAP-Rule" id="MF_01065"/>
    </source>
</evidence>
<evidence type="ECO:0000305" key="2"/>
<dbReference type="EMBL" id="AE006468">
    <property type="protein sequence ID" value="AAL20420.1"/>
    <property type="status" value="ALT_INIT"/>
    <property type="molecule type" value="Genomic_DNA"/>
</dbReference>
<dbReference type="RefSeq" id="NP_460461.3">
    <property type="nucleotide sequence ID" value="NC_003197.2"/>
</dbReference>
<dbReference type="RefSeq" id="WP_011233052.1">
    <property type="nucleotide sequence ID" value="NC_003197.2"/>
</dbReference>
<dbReference type="SMR" id="Q8ZPJ4"/>
<dbReference type="STRING" id="99287.STM1501"/>
<dbReference type="PaxDb" id="99287-STM1501"/>
<dbReference type="GeneID" id="1253019"/>
<dbReference type="KEGG" id="stm:STM1501"/>
<dbReference type="PATRIC" id="fig|99287.12.peg.1586"/>
<dbReference type="HOGENOM" id="CLU_1174761_0_0_6"/>
<dbReference type="OMA" id="WDTDDNG"/>
<dbReference type="PhylomeDB" id="Q8ZPJ4"/>
<dbReference type="Proteomes" id="UP000001014">
    <property type="component" value="Chromosome"/>
</dbReference>
<dbReference type="GO" id="GO:0005886">
    <property type="term" value="C:plasma membrane"/>
    <property type="evidence" value="ECO:0007669"/>
    <property type="project" value="UniProtKB-SubCell"/>
</dbReference>
<dbReference type="HAMAP" id="MF_01065">
    <property type="entry name" value="UPF0257"/>
    <property type="match status" value="1"/>
</dbReference>
<dbReference type="InterPro" id="IPR010646">
    <property type="entry name" value="UPF0257"/>
</dbReference>
<dbReference type="NCBIfam" id="NF002798">
    <property type="entry name" value="PRK02939.1"/>
    <property type="match status" value="1"/>
</dbReference>
<dbReference type="Pfam" id="PF06788">
    <property type="entry name" value="UPF0257"/>
    <property type="match status" value="1"/>
</dbReference>
<dbReference type="PROSITE" id="PS51257">
    <property type="entry name" value="PROKAR_LIPOPROTEIN"/>
    <property type="match status" value="1"/>
</dbReference>
<gene>
    <name evidence="1" type="primary">ynfC</name>
    <name type="ordered locus">STM1501</name>
</gene>
<organism>
    <name type="scientific">Salmonella typhimurium (strain LT2 / SGSC1412 / ATCC 700720)</name>
    <dbReference type="NCBI Taxonomy" id="99287"/>
    <lineage>
        <taxon>Bacteria</taxon>
        <taxon>Pseudomonadati</taxon>
        <taxon>Pseudomonadota</taxon>
        <taxon>Gammaproteobacteria</taxon>
        <taxon>Enterobacterales</taxon>
        <taxon>Enterobacteriaceae</taxon>
        <taxon>Salmonella</taxon>
    </lineage>
</organism>
<name>YNFC_SALTY</name>
<reference key="1">
    <citation type="journal article" date="2001" name="Nature">
        <title>Complete genome sequence of Salmonella enterica serovar Typhimurium LT2.</title>
        <authorList>
            <person name="McClelland M."/>
            <person name="Sanderson K.E."/>
            <person name="Spieth J."/>
            <person name="Clifton S.W."/>
            <person name="Latreille P."/>
            <person name="Courtney L."/>
            <person name="Porwollik S."/>
            <person name="Ali J."/>
            <person name="Dante M."/>
            <person name="Du F."/>
            <person name="Hou S."/>
            <person name="Layman D."/>
            <person name="Leonard S."/>
            <person name="Nguyen C."/>
            <person name="Scott K."/>
            <person name="Holmes A."/>
            <person name="Grewal N."/>
            <person name="Mulvaney E."/>
            <person name="Ryan E."/>
            <person name="Sun H."/>
            <person name="Florea L."/>
            <person name="Miller W."/>
            <person name="Stoneking T."/>
            <person name="Nhan M."/>
            <person name="Waterston R."/>
            <person name="Wilson R.K."/>
        </authorList>
    </citation>
    <scope>NUCLEOTIDE SEQUENCE [LARGE SCALE GENOMIC DNA]</scope>
    <source>
        <strain>LT2 / SGSC1412 / ATCC 700720</strain>
    </source>
</reference>
<proteinExistence type="inferred from homology"/>
<keyword id="KW-1003">Cell membrane</keyword>
<keyword id="KW-0449">Lipoprotein</keyword>
<keyword id="KW-0472">Membrane</keyword>
<keyword id="KW-0564">Palmitate</keyword>
<keyword id="KW-1185">Reference proteome</keyword>
<keyword id="KW-0732">Signal</keyword>